<proteinExistence type="evidence at protein level"/>
<protein>
    <recommendedName>
        <fullName>NADP-dependent glyceraldehyde-3-phosphate dehydrogenase</fullName>
        <ecNumber>1.2.1.9</ecNumber>
    </recommendedName>
    <alternativeName>
        <fullName>Glyceraldehyde-3-phosphate dehydrogenase [NADP(+)]</fullName>
    </alternativeName>
    <alternativeName>
        <fullName>Non-phosphorylating glyceraldehyde 3-phosphate dehydrogenase</fullName>
    </alternativeName>
    <alternativeName>
        <fullName>Triosephosphate dehydrogenase</fullName>
    </alternativeName>
</protein>
<reference key="1">
    <citation type="journal article" date="2002" name="FEBS Lett.">
        <title>Non-phosphorylating glyceraldehyde-3-phosphate dehydrogenase is post-translationally phosphorylated in heterotrophic cells of wheat (Triticum aestivum).</title>
        <authorList>
            <person name="Bustos D.M."/>
            <person name="Iglesias A.A."/>
        </authorList>
    </citation>
    <scope>NUCLEOTIDE SEQUENCE [MRNA]</scope>
    <scope>BIOPHYSICOCHEMICAL PROPERTIES</scope>
    <scope>PHOSPHORYLATION</scope>
    <source>
        <tissue>Endosperm</tissue>
        <tissue>Leaf</tissue>
    </source>
</reference>
<reference key="2">
    <citation type="submission" date="2005-11" db="EMBL/GenBank/DDBJ databases">
        <authorList>
            <person name="Piattoni C.V."/>
            <person name="Guerrero S.A."/>
            <person name="Bustos D.M."/>
            <person name="Iglesias A.A."/>
        </authorList>
    </citation>
    <scope>SEQUENCE REVISION</scope>
    <source>
        <tissue>Leaf</tissue>
    </source>
</reference>
<reference key="3">
    <citation type="journal article" date="2003" name="Plant Physiol.">
        <title>Phosphorylated non-phosphorylating glyceraldehyde-3-phosphate dehydrogenase from heterotrophic cells of wheat interacts with 14-3-3 proteins.</title>
        <authorList>
            <person name="Bustos D.M."/>
            <person name="Iglesias A.A."/>
        </authorList>
    </citation>
    <scope>INTERACTION WITH 14-3-3 PROTEIN</scope>
    <scope>SUBCELLULAR LOCATION</scope>
    <scope>ACTIVITY REGULATION</scope>
</reference>
<reference key="4">
    <citation type="journal article" date="2005" name="J. Mol. Graph. Model.">
        <title>A model for the interaction between plant GAPN and 14-3-3zeta using protein-protein docking calculations, electrostatic potentials and kinetics.</title>
        <authorList>
            <person name="Bustos D.M."/>
            <person name="Iglesias A.A."/>
        </authorList>
    </citation>
    <scope>3D-STRUCTURE MODELING</scope>
</reference>
<dbReference type="EC" id="1.2.1.9"/>
<dbReference type="EMBL" id="AF521190">
    <property type="protein sequence ID" value="AAM77678.1"/>
    <property type="status" value="ALT_FRAME"/>
    <property type="molecule type" value="mRNA"/>
</dbReference>
<dbReference type="EMBL" id="AF521191">
    <property type="protein sequence ID" value="AAM77679.2"/>
    <property type="molecule type" value="mRNA"/>
</dbReference>
<dbReference type="SMR" id="Q8LK61"/>
<dbReference type="STRING" id="4565.Q8LK61"/>
<dbReference type="PaxDb" id="4565-Traes_2DS_22500FA4F.1"/>
<dbReference type="eggNOG" id="KOG2450">
    <property type="taxonomic scope" value="Eukaryota"/>
</dbReference>
<dbReference type="BRENDA" id="1.2.1.9">
    <property type="organism ID" value="6500"/>
</dbReference>
<dbReference type="SABIO-RK" id="Q8LK61"/>
<dbReference type="Proteomes" id="UP000019116">
    <property type="component" value="Unplaced"/>
</dbReference>
<dbReference type="ExpressionAtlas" id="Q8LK61">
    <property type="expression patterns" value="baseline and differential"/>
</dbReference>
<dbReference type="GO" id="GO:0005737">
    <property type="term" value="C:cytoplasm"/>
    <property type="evidence" value="ECO:0007669"/>
    <property type="project" value="UniProtKB-SubCell"/>
</dbReference>
<dbReference type="GO" id="GO:0008886">
    <property type="term" value="F:glyceraldehyde-3-phosphate dehydrogenase (NADP+) (non-phosphorylating) activity"/>
    <property type="evidence" value="ECO:0007669"/>
    <property type="project" value="UniProtKB-EC"/>
</dbReference>
<dbReference type="GO" id="GO:0008911">
    <property type="term" value="F:lactaldehyde dehydrogenase (NAD+) activity"/>
    <property type="evidence" value="ECO:0000318"/>
    <property type="project" value="GO_Central"/>
</dbReference>
<dbReference type="CDD" id="cd07082">
    <property type="entry name" value="ALDH_F11_NP-GAPDH"/>
    <property type="match status" value="1"/>
</dbReference>
<dbReference type="FunFam" id="3.40.309.10:FF:000016">
    <property type="entry name" value="NADP-dependent glyceraldehyde-3-phosphate dehydrogenase"/>
    <property type="match status" value="1"/>
</dbReference>
<dbReference type="FunFam" id="3.40.605.10:FF:000013">
    <property type="entry name" value="NADP-dependent glyceraldehyde-3-phosphate dehydrogenase"/>
    <property type="match status" value="1"/>
</dbReference>
<dbReference type="Gene3D" id="3.40.605.10">
    <property type="entry name" value="Aldehyde Dehydrogenase, Chain A, domain 1"/>
    <property type="match status" value="1"/>
</dbReference>
<dbReference type="Gene3D" id="3.40.309.10">
    <property type="entry name" value="Aldehyde Dehydrogenase, Chain A, domain 2"/>
    <property type="match status" value="1"/>
</dbReference>
<dbReference type="InterPro" id="IPR016161">
    <property type="entry name" value="Ald_DH/histidinol_DH"/>
</dbReference>
<dbReference type="InterPro" id="IPR016163">
    <property type="entry name" value="Ald_DH_C"/>
</dbReference>
<dbReference type="InterPro" id="IPR016160">
    <property type="entry name" value="Ald_DH_CS_CYS"/>
</dbReference>
<dbReference type="InterPro" id="IPR029510">
    <property type="entry name" value="Ald_DH_CS_GLU"/>
</dbReference>
<dbReference type="InterPro" id="IPR016162">
    <property type="entry name" value="Ald_DH_N"/>
</dbReference>
<dbReference type="InterPro" id="IPR015590">
    <property type="entry name" value="Aldehyde_DH_dom"/>
</dbReference>
<dbReference type="InterPro" id="IPR051020">
    <property type="entry name" value="ALDH-related_metabolic_enz"/>
</dbReference>
<dbReference type="PANTHER" id="PTHR42991">
    <property type="entry name" value="ALDEHYDE DEHYDROGENASE"/>
    <property type="match status" value="1"/>
</dbReference>
<dbReference type="PANTHER" id="PTHR42991:SF1">
    <property type="entry name" value="ALDEHYDE DEHYDROGENASE"/>
    <property type="match status" value="1"/>
</dbReference>
<dbReference type="Pfam" id="PF00171">
    <property type="entry name" value="Aldedh"/>
    <property type="match status" value="1"/>
</dbReference>
<dbReference type="SUPFAM" id="SSF53720">
    <property type="entry name" value="ALDH-like"/>
    <property type="match status" value="1"/>
</dbReference>
<dbReference type="PROSITE" id="PS00070">
    <property type="entry name" value="ALDEHYDE_DEHYDR_CYS"/>
    <property type="match status" value="1"/>
</dbReference>
<dbReference type="PROSITE" id="PS00687">
    <property type="entry name" value="ALDEHYDE_DEHYDR_GLU"/>
    <property type="match status" value="1"/>
</dbReference>
<accession>Q8LK61</accession>
<accession>Q8L5J9</accession>
<sequence length="496" mass="53047">MAGTGVFADVLDGEVYKYYADGEWRASASGKTVAIVNPTTRQTQYRVQACTQEEVNKVMDAAKVAQKSWARTPLWKRAELLHKAAAILKEHKTPIAESLVKEIAKPAKDAVSEVVRSGDLVSYTAEEGVRILGEGKLLVSDSFPGNERNKYCLSSKVPLGVVLAIPPFNYPVNLAVSKIGPALIAGNSLVLKPPTQGAVAALHMVHCFHLAGFPKGLISCVTGKGSEIGDFLTMHPGVNCISFTGGDTGIAISKKAGMVPLQMELGGKDACIVLEDADLDLVAANIVKGGFSYSGQRCTAVKVVLIMEAVADTVVEKVNAKLAKLKVGPPEDDSDITPVVTESSANFIEGLVMDAKEKGATFCQEYRREGNLIWPLLLDHVRPDMRIAWEEPFGPVLPVIRINSVEEGIHHCNASNFGLQGCVFTRDINKAIMISDAMESGTVQINSAPARGPDHFPFQGLKDSGIGSQGITNSINMMTKVKSTVINLPSPSYTMG</sequence>
<gene>
    <name type="primary">GAPN</name>
</gene>
<keyword id="KW-0963">Cytoplasm</keyword>
<keyword id="KW-0521">NADP</keyword>
<keyword id="KW-0560">Oxidoreductase</keyword>
<keyword id="KW-0597">Phosphoprotein</keyword>
<keyword id="KW-1185">Reference proteome</keyword>
<evidence type="ECO:0000250" key="1"/>
<evidence type="ECO:0000255" key="2"/>
<evidence type="ECO:0000255" key="3">
    <source>
        <dbReference type="PROSITE-ProRule" id="PRU10007"/>
    </source>
</evidence>
<evidence type="ECO:0000255" key="4">
    <source>
        <dbReference type="PROSITE-ProRule" id="PRU10008"/>
    </source>
</evidence>
<evidence type="ECO:0000269" key="5">
    <source>
    </source>
</evidence>
<evidence type="ECO:0000269" key="6">
    <source>
    </source>
</evidence>
<evidence type="ECO:0000305" key="7"/>
<name>GAPN_WHEAT</name>
<feature type="chain" id="PRO_0000291765" description="NADP-dependent glyceraldehyde-3-phosphate dehydrogenase">
    <location>
        <begin position="1"/>
        <end position="496"/>
    </location>
</feature>
<feature type="active site" description="Proton acceptor" evidence="3 4">
    <location>
        <position position="264"/>
    </location>
</feature>
<feature type="active site" description="Nucleophile" evidence="3 4">
    <location>
        <position position="298"/>
    </location>
</feature>
<feature type="binding site" evidence="1">
    <location>
        <position position="116"/>
    </location>
    <ligand>
        <name>substrate</name>
    </ligand>
</feature>
<feature type="binding site" evidence="1">
    <location>
        <begin position="169"/>
        <end position="170"/>
    </location>
    <ligand>
        <name>substrate</name>
    </ligand>
</feature>
<feature type="binding site" evidence="1">
    <location>
        <position position="192"/>
    </location>
    <ligand>
        <name>NADP(+)</name>
        <dbReference type="ChEBI" id="CHEBI:58349"/>
    </ligand>
</feature>
<feature type="binding site" evidence="1">
    <location>
        <position position="195"/>
    </location>
    <ligand>
        <name>NADP(+)</name>
        <dbReference type="ChEBI" id="CHEBI:58349"/>
    </ligand>
</feature>
<feature type="binding site" evidence="1">
    <location>
        <position position="230"/>
    </location>
    <ligand>
        <name>NADP(+)</name>
        <dbReference type="ChEBI" id="CHEBI:58349"/>
    </ligand>
</feature>
<feature type="binding site" evidence="1">
    <location>
        <begin position="245"/>
        <end position="249"/>
    </location>
    <ligand>
        <name>NAD(+)</name>
        <dbReference type="ChEBI" id="CHEBI:57540"/>
    </ligand>
</feature>
<feature type="binding site" evidence="1">
    <location>
        <begin position="297"/>
        <end position="299"/>
    </location>
    <ligand>
        <name>substrate</name>
    </ligand>
</feature>
<feature type="binding site" evidence="1">
    <location>
        <position position="391"/>
    </location>
    <ligand>
        <name>NADP(+)</name>
        <dbReference type="ChEBI" id="CHEBI:58349"/>
    </ligand>
</feature>
<feature type="binding site" evidence="1">
    <location>
        <position position="451"/>
    </location>
    <ligand>
        <name>substrate</name>
    </ligand>
</feature>
<feature type="site" description="Transition state stabilizer" evidence="1">
    <location>
        <position position="169"/>
    </location>
</feature>
<feature type="modified residue" description="Phosphoserine" evidence="2">
    <location>
        <position position="404"/>
    </location>
</feature>
<feature type="sequence conflict" description="In Ref. 1; AAM77678." evidence="7" ref="1">
    <original>S</original>
    <variation>C</variation>
    <location>
        <position position="98"/>
    </location>
</feature>
<feature type="sequence conflict" description="In Ref. 1; AAM77678." evidence="7" ref="1">
    <original>V</original>
    <variation>I</variation>
    <location>
        <position position="157"/>
    </location>
</feature>
<feature type="sequence conflict" description="In Ref. 1; AAM77678." evidence="7" ref="1">
    <original>V</original>
    <variation>A</variation>
    <location>
        <position position="172"/>
    </location>
</feature>
<feature type="sequence conflict" description="In Ref. 1; AAM77678." evidence="7" ref="1">
    <original>V</original>
    <variation>G</variation>
    <location>
        <position position="176"/>
    </location>
</feature>
<feature type="sequence conflict" description="In Ref. 1; AAM77678." evidence="7" ref="1">
    <original>S</original>
    <variation>A</variation>
    <location>
        <position position="188"/>
    </location>
</feature>
<feature type="sequence conflict" description="In Ref. 1; AAM77678." evidence="7" ref="1">
    <original>E</original>
    <variation>Z</variation>
    <location>
        <position position="316"/>
    </location>
</feature>
<organism>
    <name type="scientific">Triticum aestivum</name>
    <name type="common">Wheat</name>
    <dbReference type="NCBI Taxonomy" id="4565"/>
    <lineage>
        <taxon>Eukaryota</taxon>
        <taxon>Viridiplantae</taxon>
        <taxon>Streptophyta</taxon>
        <taxon>Embryophyta</taxon>
        <taxon>Tracheophyta</taxon>
        <taxon>Spermatophyta</taxon>
        <taxon>Magnoliopsida</taxon>
        <taxon>Liliopsida</taxon>
        <taxon>Poales</taxon>
        <taxon>Poaceae</taxon>
        <taxon>BOP clade</taxon>
        <taxon>Pooideae</taxon>
        <taxon>Triticodae</taxon>
        <taxon>Triticeae</taxon>
        <taxon>Triticinae</taxon>
        <taxon>Triticum</taxon>
    </lineage>
</organism>
<comment type="function">
    <text>Important as a means of generating NADPH for biosynthetic reactions.</text>
</comment>
<comment type="catalytic activity">
    <reaction>
        <text>D-glyceraldehyde 3-phosphate + NADP(+) + H2O = (2R)-3-phosphoglycerate + NADPH + 2 H(+)</text>
        <dbReference type="Rhea" id="RHEA:14669"/>
        <dbReference type="ChEBI" id="CHEBI:15377"/>
        <dbReference type="ChEBI" id="CHEBI:15378"/>
        <dbReference type="ChEBI" id="CHEBI:57783"/>
        <dbReference type="ChEBI" id="CHEBI:58272"/>
        <dbReference type="ChEBI" id="CHEBI:58349"/>
        <dbReference type="ChEBI" id="CHEBI:59776"/>
        <dbReference type="EC" id="1.2.1.9"/>
    </reaction>
</comment>
<comment type="activity regulation">
    <text evidence="6">Insensitive to magnesium or calcium when dephosphorylated. When phosphorylated, 3-fold activation by magnesium or calcium, 2-fold activation by potassium, inhibited by ADP and AMP and insensitive to ATP or PPi.</text>
</comment>
<comment type="biophysicochemical properties">
    <kinetics>
        <KM evidence="5">40 uM for NADP</KM>
        <KM evidence="5">118 uM for D-glyceraldehyde-3-phosphate</KM>
        <text>When the protein is phosphorylated, the affinity for substrates is similar but the Vmax is lowered.</text>
    </kinetics>
</comment>
<comment type="subunit">
    <text evidence="6">Interacts with 14-3-3 protein when phosphorylated. This interaction is released by divalent cations.</text>
</comment>
<comment type="subcellular location">
    <subcellularLocation>
        <location evidence="6">Cytoplasm</location>
    </subcellularLocation>
</comment>
<comment type="PTM">
    <text evidence="5">Phosphorylated in shoots and non-photosynthetic tissues, but not in leaves.</text>
</comment>
<comment type="similarity">
    <text evidence="7">Belongs to the aldehyde dehydrogenase family.</text>
</comment>
<comment type="caution">
    <text evidence="7">Sequences of mRNA encoded by the same gene but extracted from leaves (AF521191) or from endosperm (AF521190) differ at several prositions due to sequencing uncertainties.</text>
</comment>
<comment type="sequence caution" evidence="7">
    <conflict type="frameshift">
        <sequence resource="EMBL-CDS" id="AAM77678"/>
    </conflict>
</comment>